<organism evidence="3">
    <name type="scientific">Rana temporaria</name>
    <name type="common">European common frog</name>
    <dbReference type="NCBI Taxonomy" id="8407"/>
    <lineage>
        <taxon>Eukaryota</taxon>
        <taxon>Metazoa</taxon>
        <taxon>Chordata</taxon>
        <taxon>Craniata</taxon>
        <taxon>Vertebrata</taxon>
        <taxon>Euteleostomi</taxon>
        <taxon>Amphibia</taxon>
        <taxon>Batrachia</taxon>
        <taxon>Anura</taxon>
        <taxon>Neobatrachia</taxon>
        <taxon>Ranoidea</taxon>
        <taxon>Ranidae</taxon>
        <taxon>Rana</taxon>
        <taxon>Rana</taxon>
    </lineage>
</organism>
<name>B1ITC_RANTE</name>
<evidence type="ECO:0000250" key="1">
    <source>
        <dbReference type="UniProtKB" id="P82825"/>
    </source>
</evidence>
<evidence type="ECO:0000269" key="2">
    <source>
    </source>
</evidence>
<evidence type="ECO:0000303" key="3">
    <source>
    </source>
</evidence>
<evidence type="ECO:0000305" key="4"/>
<evidence type="ECO:0000305" key="5">
    <source>
    </source>
</evidence>
<protein>
    <recommendedName>
        <fullName evidence="3">Brevinin 1Tc</fullName>
    </recommendedName>
</protein>
<dbReference type="GO" id="GO:0005576">
    <property type="term" value="C:extracellular region"/>
    <property type="evidence" value="ECO:0000314"/>
    <property type="project" value="UniProtKB"/>
</dbReference>
<dbReference type="GO" id="GO:0042742">
    <property type="term" value="P:defense response to bacterium"/>
    <property type="evidence" value="ECO:0007669"/>
    <property type="project" value="UniProtKB-KW"/>
</dbReference>
<dbReference type="GO" id="GO:0045087">
    <property type="term" value="P:innate immune response"/>
    <property type="evidence" value="ECO:0007669"/>
    <property type="project" value="UniProtKB-KW"/>
</dbReference>
<reference evidence="4" key="1">
    <citation type="journal article" date="2021" name="Anal. Bioanal. Chem.">
        <title>Differentiation of Central Slovenian and Moscow populations of Rana temporaria frogs using peptide biomarkers of temporins family.</title>
        <authorList>
            <person name="Samgina T.Y."/>
            <person name="Vasileva I.D."/>
            <person name="Kovalev S.V."/>
            <person name="Trebse P."/>
            <person name="Torkar G."/>
            <person name="Surin A.K."/>
            <person name="Zubarev R.A."/>
            <person name="Lebedev A.T."/>
        </authorList>
    </citation>
    <scope>PROTEIN SEQUENCE</scope>
    <scope>IDENTIFICATION BY MASS SPECTROMETRY</scope>
    <scope>SUBCELLULAR LOCATION</scope>
    <scope>DISULFIDE BOND</scope>
    <source>
        <tissue evidence="3">Skin secretion</tissue>
    </source>
</reference>
<keyword id="KW-0878">Amphibian defense peptide</keyword>
<keyword id="KW-0044">Antibiotic</keyword>
<keyword id="KW-0929">Antimicrobial</keyword>
<keyword id="KW-0903">Direct protein sequencing</keyword>
<keyword id="KW-1015">Disulfide bond</keyword>
<keyword id="KW-0391">Immunity</keyword>
<keyword id="KW-0399">Innate immunity</keyword>
<keyword id="KW-0964">Secreted</keyword>
<accession>C0HM35</accession>
<sequence>LVPMFLSKLICFITKKC</sequence>
<feature type="peptide" id="PRO_0000456401" description="Brevinin 1Tc" evidence="2">
    <location>
        <begin position="1"/>
        <end position="17"/>
    </location>
</feature>
<feature type="disulfide bond" evidence="2">
    <location>
        <begin position="11"/>
        <end position="17"/>
    </location>
</feature>
<comment type="function">
    <text evidence="1">Antimicrobial peptide.</text>
</comment>
<comment type="subcellular location">
    <subcellularLocation>
        <location evidence="2">Secreted</location>
    </subcellularLocation>
</comment>
<comment type="tissue specificity">
    <text evidence="5">Expressed by the skin glands.</text>
</comment>
<comment type="mass spectrometry"/>
<comment type="similarity">
    <text evidence="4">Belongs to the frog skin active peptide (FSAP) family. Brevinin subfamily.</text>
</comment>
<proteinExistence type="evidence at protein level"/>